<keyword id="KW-0963">Cytoplasm</keyword>
<keyword id="KW-1185">Reference proteome</keyword>
<feature type="chain" id="PRO_0000448753" description="Chemotaxis regulatory protein ChePep">
    <location>
        <begin position="1"/>
        <end position="505"/>
    </location>
</feature>
<feature type="region of interest" description="Disordered" evidence="1">
    <location>
        <begin position="154"/>
        <end position="403"/>
    </location>
</feature>
<feature type="region of interest" description="Disordered" evidence="1">
    <location>
        <begin position="420"/>
        <end position="465"/>
    </location>
</feature>
<feature type="compositionally biased region" description="Basic and acidic residues" evidence="1">
    <location>
        <begin position="172"/>
        <end position="263"/>
    </location>
</feature>
<feature type="compositionally biased region" description="Basic and acidic residues" evidence="1">
    <location>
        <begin position="289"/>
        <end position="311"/>
    </location>
</feature>
<feature type="compositionally biased region" description="Basic and acidic residues" evidence="1">
    <location>
        <begin position="337"/>
        <end position="346"/>
    </location>
</feature>
<feature type="compositionally biased region" description="Basic and acidic residues" evidence="1">
    <location>
        <begin position="359"/>
        <end position="373"/>
    </location>
</feature>
<feature type="compositionally biased region" description="Basic and acidic residues" evidence="1">
    <location>
        <begin position="386"/>
        <end position="398"/>
    </location>
</feature>
<feature type="compositionally biased region" description="Low complexity" evidence="1">
    <location>
        <begin position="440"/>
        <end position="451"/>
    </location>
</feature>
<reference key="1">
    <citation type="journal article" date="1997" name="Nature">
        <title>The complete genome sequence of the gastric pathogen Helicobacter pylori.</title>
        <authorList>
            <person name="Tomb J.-F."/>
            <person name="White O."/>
            <person name="Kerlavage A.R."/>
            <person name="Clayton R.A."/>
            <person name="Sutton G.G."/>
            <person name="Fleischmann R.D."/>
            <person name="Ketchum K.A."/>
            <person name="Klenk H.-P."/>
            <person name="Gill S.R."/>
            <person name="Dougherty B.A."/>
            <person name="Nelson K.E."/>
            <person name="Quackenbush J."/>
            <person name="Zhou L."/>
            <person name="Kirkness E.F."/>
            <person name="Peterson S.N."/>
            <person name="Loftus B.J."/>
            <person name="Richardson D.L."/>
            <person name="Dodson R.J."/>
            <person name="Khalak H.G."/>
            <person name="Glodek A."/>
            <person name="McKenney K."/>
            <person name="FitzGerald L.M."/>
            <person name="Lee N."/>
            <person name="Adams M.D."/>
            <person name="Hickey E.K."/>
            <person name="Berg D.E."/>
            <person name="Gocayne J.D."/>
            <person name="Utterback T.R."/>
            <person name="Peterson J.D."/>
            <person name="Kelley J.M."/>
            <person name="Cotton M.D."/>
            <person name="Weidman J.F."/>
            <person name="Fujii C."/>
            <person name="Bowman C."/>
            <person name="Watthey L."/>
            <person name="Wallin E."/>
            <person name="Hayes W.S."/>
            <person name="Borodovsky M."/>
            <person name="Karp P.D."/>
            <person name="Smith H.O."/>
            <person name="Fraser C.M."/>
            <person name="Venter J.C."/>
        </authorList>
    </citation>
    <scope>NUCLEOTIDE SEQUENCE [LARGE SCALE GENOMIC DNA]</scope>
    <source>
        <strain>ATCC 700392 / 26695</strain>
    </source>
</reference>
<reference key="2">
    <citation type="journal article" date="2011" name="MBio">
        <title>ChePep controls Helicobacter pylori Infection of the gastric glands and chemotaxis in the Epsilonproteobacteria.</title>
        <authorList>
            <person name="Howitt M.R."/>
            <person name="Lee J.Y."/>
            <person name="Lertsethtakarn P."/>
            <person name="Vogelmann R."/>
            <person name="Joubert L.M."/>
            <person name="Ottemann K.M."/>
            <person name="Amieva M.R."/>
        </authorList>
    </citation>
    <scope>FUNCTION</scope>
    <scope>DISRUPTION PHENOTYPE</scope>
    <scope>SUBCELLULAR LOCATION</scope>
</reference>
<reference key="3">
    <citation type="journal article" date="2015" name="Mol. Microbiol.">
        <title>Helicobacter pylori CheZ(HP) and ChePep form a novel chemotaxis-regulatory complex distinct from the core chemotaxis signaling proteins and the flagellar motor.</title>
        <authorList>
            <person name="Lertsethtakarn P."/>
            <person name="Howitt M.R."/>
            <person name="Castellon J."/>
            <person name="Amieva M.R."/>
            <person name="Ottemann K.M."/>
        </authorList>
    </citation>
    <scope>FUNCTION</scope>
    <scope>SUBCELLULAR LOCATION</scope>
    <scope>INTERACTION WITH CHEZ</scope>
    <source>
        <strain>G27</strain>
    </source>
</reference>
<name>CHPEP_HELPY</name>
<sequence>MKMILFNQNPMITKLLESVSKKLELPIENFNHYQELSARLKENQEWLLIADDECLEKLDQVDWLELKETISQNKNSVCMYKKGNEAQPFLEGFEVKIKKPFLPTEMLKVLQKKLGSNASELEPSQNLDPTQEVLETNWDELENLGDLEALVQEEPNNEEQLLPTLNDQEEKEEVKEEEKEEVKEEEKEEVKEEEKEEVKETPQEEKKPKDDETQEGETLKDKEVSKELEAPQELEIPKEETQEQDPIKEETQENKEEKQEKTQDSPSAQELEAMQELVKEIQENSNGQENKEKTQESAEIPQDKEIQEVVTEKTQAQELEVPKEKTQESAEALQETQAHELEKQEIAETPQDVEIPQSQDKEVQELEIPKEETQENTETPQDVETPQEKETQEDHYESIEDIPEPVMAKAMGEELPFLNEAVAKIPNNENDTETPKESVTETSKNENNTETPQEKEESDKTSSPLELRLNLQDLLKSLNQESLKSLLENKTLSIKITLEDKKPNA</sequence>
<comment type="function">
    <text evidence="2 3">Plays an essential role in chemotaxis. Regulates flagellar rotation through the formation of a complex with chemotaxis protein CheZ (PubMed:21791582, PubMed:26061894). Plays a major role in colonization of the stomach (PubMed:21791582).</text>
</comment>
<comment type="subunit">
    <text evidence="3">Interacts with CheZ; the interaction is essential for each other polar localization.</text>
</comment>
<comment type="subcellular location">
    <subcellularLocation>
        <location evidence="2 3">Cytoplasm</location>
    </subcellularLocation>
    <text evidence="3">Localizes to the cell poles.</text>
</comment>
<comment type="disruption phenotype">
    <text evidence="2">Deletion mutants cannot control the rotation of their flagella and swim with abnormally frequent reversals.</text>
</comment>
<accession>O25089</accession>
<gene>
    <name evidence="4" type="primary">chePep</name>
    <name type="ordered locus">HP_0322</name>
</gene>
<evidence type="ECO:0000256" key="1">
    <source>
        <dbReference type="SAM" id="MobiDB-lite"/>
    </source>
</evidence>
<evidence type="ECO:0000269" key="2">
    <source>
    </source>
</evidence>
<evidence type="ECO:0000269" key="3">
    <source>
    </source>
</evidence>
<evidence type="ECO:0000303" key="4">
    <source>
    </source>
</evidence>
<dbReference type="EMBL" id="AE000511">
    <property type="protein sequence ID" value="AAD07390.1"/>
    <property type="molecule type" value="Genomic_DNA"/>
</dbReference>
<dbReference type="PIR" id="B64560">
    <property type="entry name" value="B64560"/>
</dbReference>
<dbReference type="RefSeq" id="NP_207120.1">
    <property type="nucleotide sequence ID" value="NC_000915.1"/>
</dbReference>
<dbReference type="RefSeq" id="WP_000782061.1">
    <property type="nucleotide sequence ID" value="NC_018939.1"/>
</dbReference>
<dbReference type="SMR" id="O25089"/>
<dbReference type="IntAct" id="O25089">
    <property type="interactions" value="1"/>
</dbReference>
<dbReference type="STRING" id="85962.HP_0322"/>
<dbReference type="PaxDb" id="85962-C694_01630"/>
<dbReference type="EnsemblBacteria" id="AAD07390">
    <property type="protein sequence ID" value="AAD07390"/>
    <property type="gene ID" value="HP_0322"/>
</dbReference>
<dbReference type="KEGG" id="heo:C694_01630"/>
<dbReference type="KEGG" id="hpy:HP_0322"/>
<dbReference type="PATRIC" id="fig|85962.47.peg.344"/>
<dbReference type="InParanoid" id="O25089"/>
<dbReference type="OrthoDB" id="5324656at2"/>
<dbReference type="Proteomes" id="UP000000429">
    <property type="component" value="Chromosome"/>
</dbReference>
<dbReference type="GO" id="GO:0005737">
    <property type="term" value="C:cytoplasm"/>
    <property type="evidence" value="ECO:0007669"/>
    <property type="project" value="UniProtKB-SubCell"/>
</dbReference>
<dbReference type="InterPro" id="IPR049800">
    <property type="entry name" value="Chtaxis_ChePep"/>
</dbReference>
<dbReference type="NCBIfam" id="NF041272">
    <property type="entry name" value="Chtaxis_ChePep"/>
    <property type="match status" value="1"/>
</dbReference>
<organism>
    <name type="scientific">Helicobacter pylori (strain ATCC 700392 / 26695)</name>
    <name type="common">Campylobacter pylori</name>
    <dbReference type="NCBI Taxonomy" id="85962"/>
    <lineage>
        <taxon>Bacteria</taxon>
        <taxon>Pseudomonadati</taxon>
        <taxon>Campylobacterota</taxon>
        <taxon>Epsilonproteobacteria</taxon>
        <taxon>Campylobacterales</taxon>
        <taxon>Helicobacteraceae</taxon>
        <taxon>Helicobacter</taxon>
    </lineage>
</organism>
<protein>
    <recommendedName>
        <fullName evidence="4">Chemotaxis regulatory protein ChePep</fullName>
    </recommendedName>
</protein>
<proteinExistence type="evidence at protein level"/>